<keyword id="KW-0067">ATP-binding</keyword>
<keyword id="KW-0963">Cytoplasm</keyword>
<keyword id="KW-0275">Fatty acid biosynthesis</keyword>
<keyword id="KW-0276">Fatty acid metabolism</keyword>
<keyword id="KW-0444">Lipid biosynthesis</keyword>
<keyword id="KW-0443">Lipid metabolism</keyword>
<keyword id="KW-0547">Nucleotide-binding</keyword>
<keyword id="KW-0808">Transferase</keyword>
<organism>
    <name type="scientific">Escherichia coli O157:H7 (strain EC4115 / EHEC)</name>
    <dbReference type="NCBI Taxonomy" id="444450"/>
    <lineage>
        <taxon>Bacteria</taxon>
        <taxon>Pseudomonadati</taxon>
        <taxon>Pseudomonadota</taxon>
        <taxon>Gammaproteobacteria</taxon>
        <taxon>Enterobacterales</taxon>
        <taxon>Enterobacteriaceae</taxon>
        <taxon>Escherichia</taxon>
    </lineage>
</organism>
<evidence type="ECO:0000255" key="1">
    <source>
        <dbReference type="HAMAP-Rule" id="MF_00823"/>
    </source>
</evidence>
<evidence type="ECO:0000255" key="2">
    <source>
        <dbReference type="PROSITE-ProRule" id="PRU01137"/>
    </source>
</evidence>
<dbReference type="EC" id="2.1.3.15" evidence="1"/>
<dbReference type="EMBL" id="CP001164">
    <property type="protein sequence ID" value="ACI37716.1"/>
    <property type="molecule type" value="Genomic_DNA"/>
</dbReference>
<dbReference type="RefSeq" id="WP_000055741.1">
    <property type="nucleotide sequence ID" value="NC_011353.1"/>
</dbReference>
<dbReference type="SMR" id="B5Z0G4"/>
<dbReference type="GeneID" id="86945115"/>
<dbReference type="KEGG" id="ecf:ECH74115_0195"/>
<dbReference type="HOGENOM" id="CLU_015486_0_2_6"/>
<dbReference type="UniPathway" id="UPA00655">
    <property type="reaction ID" value="UER00711"/>
</dbReference>
<dbReference type="GO" id="GO:0009317">
    <property type="term" value="C:acetyl-CoA carboxylase complex"/>
    <property type="evidence" value="ECO:0007669"/>
    <property type="project" value="InterPro"/>
</dbReference>
<dbReference type="GO" id="GO:0003989">
    <property type="term" value="F:acetyl-CoA carboxylase activity"/>
    <property type="evidence" value="ECO:0007669"/>
    <property type="project" value="InterPro"/>
</dbReference>
<dbReference type="GO" id="GO:0005524">
    <property type="term" value="F:ATP binding"/>
    <property type="evidence" value="ECO:0007669"/>
    <property type="project" value="UniProtKB-KW"/>
</dbReference>
<dbReference type="GO" id="GO:0016743">
    <property type="term" value="F:carboxyl- or carbamoyltransferase activity"/>
    <property type="evidence" value="ECO:0007669"/>
    <property type="project" value="UniProtKB-UniRule"/>
</dbReference>
<dbReference type="GO" id="GO:0006633">
    <property type="term" value="P:fatty acid biosynthetic process"/>
    <property type="evidence" value="ECO:0007669"/>
    <property type="project" value="UniProtKB-KW"/>
</dbReference>
<dbReference type="GO" id="GO:2001295">
    <property type="term" value="P:malonyl-CoA biosynthetic process"/>
    <property type="evidence" value="ECO:0007669"/>
    <property type="project" value="UniProtKB-UniRule"/>
</dbReference>
<dbReference type="FunFam" id="3.90.226.10:FF:000008">
    <property type="entry name" value="Acetyl-coenzyme A carboxylase carboxyl transferase subunit alpha"/>
    <property type="match status" value="1"/>
</dbReference>
<dbReference type="Gene3D" id="3.90.226.10">
    <property type="entry name" value="2-enoyl-CoA Hydratase, Chain A, domain 1"/>
    <property type="match status" value="1"/>
</dbReference>
<dbReference type="HAMAP" id="MF_00823">
    <property type="entry name" value="AcetylCoA_CT_alpha"/>
    <property type="match status" value="1"/>
</dbReference>
<dbReference type="InterPro" id="IPR001095">
    <property type="entry name" value="Acetyl_CoA_COase_a_su"/>
</dbReference>
<dbReference type="InterPro" id="IPR029045">
    <property type="entry name" value="ClpP/crotonase-like_dom_sf"/>
</dbReference>
<dbReference type="InterPro" id="IPR011763">
    <property type="entry name" value="COA_CT_C"/>
</dbReference>
<dbReference type="NCBIfam" id="TIGR00513">
    <property type="entry name" value="accA"/>
    <property type="match status" value="1"/>
</dbReference>
<dbReference type="NCBIfam" id="NF041504">
    <property type="entry name" value="AccA_sub"/>
    <property type="match status" value="1"/>
</dbReference>
<dbReference type="NCBIfam" id="NF004344">
    <property type="entry name" value="PRK05724.1"/>
    <property type="match status" value="1"/>
</dbReference>
<dbReference type="PANTHER" id="PTHR42853">
    <property type="entry name" value="ACETYL-COENZYME A CARBOXYLASE CARBOXYL TRANSFERASE SUBUNIT ALPHA"/>
    <property type="match status" value="1"/>
</dbReference>
<dbReference type="PANTHER" id="PTHR42853:SF3">
    <property type="entry name" value="ACETYL-COENZYME A CARBOXYLASE CARBOXYL TRANSFERASE SUBUNIT ALPHA, CHLOROPLASTIC"/>
    <property type="match status" value="1"/>
</dbReference>
<dbReference type="Pfam" id="PF03255">
    <property type="entry name" value="ACCA"/>
    <property type="match status" value="1"/>
</dbReference>
<dbReference type="PRINTS" id="PR01069">
    <property type="entry name" value="ACCCTRFRASEA"/>
</dbReference>
<dbReference type="SUPFAM" id="SSF52096">
    <property type="entry name" value="ClpP/crotonase"/>
    <property type="match status" value="1"/>
</dbReference>
<dbReference type="PROSITE" id="PS50989">
    <property type="entry name" value="COA_CT_CTER"/>
    <property type="match status" value="1"/>
</dbReference>
<reference key="1">
    <citation type="journal article" date="2011" name="Proc. Natl. Acad. Sci. U.S.A.">
        <title>Genomic anatomy of Escherichia coli O157:H7 outbreaks.</title>
        <authorList>
            <person name="Eppinger M."/>
            <person name="Mammel M.K."/>
            <person name="Leclerc J.E."/>
            <person name="Ravel J."/>
            <person name="Cebula T.A."/>
        </authorList>
    </citation>
    <scope>NUCLEOTIDE SEQUENCE [LARGE SCALE GENOMIC DNA]</scope>
    <source>
        <strain>EC4115 / EHEC</strain>
    </source>
</reference>
<comment type="function">
    <text evidence="1">Component of the acetyl coenzyme A carboxylase (ACC) complex. First, biotin carboxylase catalyzes the carboxylation of biotin on its carrier protein (BCCP) and then the CO(2) group is transferred by the carboxyltransferase to acetyl-CoA to form malonyl-CoA.</text>
</comment>
<comment type="catalytic activity">
    <reaction evidence="1">
        <text>N(6)-carboxybiotinyl-L-lysyl-[protein] + acetyl-CoA = N(6)-biotinyl-L-lysyl-[protein] + malonyl-CoA</text>
        <dbReference type="Rhea" id="RHEA:54728"/>
        <dbReference type="Rhea" id="RHEA-COMP:10505"/>
        <dbReference type="Rhea" id="RHEA-COMP:10506"/>
        <dbReference type="ChEBI" id="CHEBI:57288"/>
        <dbReference type="ChEBI" id="CHEBI:57384"/>
        <dbReference type="ChEBI" id="CHEBI:83144"/>
        <dbReference type="ChEBI" id="CHEBI:83145"/>
        <dbReference type="EC" id="2.1.3.15"/>
    </reaction>
</comment>
<comment type="pathway">
    <text evidence="1">Lipid metabolism; malonyl-CoA biosynthesis; malonyl-CoA from acetyl-CoA: step 1/1.</text>
</comment>
<comment type="subunit">
    <text evidence="1">Acetyl-CoA carboxylase is a heterohexamer composed of biotin carboxyl carrier protein (AccB), biotin carboxylase (AccC) and two subunits each of ACCase subunit alpha (AccA) and ACCase subunit beta (AccD).</text>
</comment>
<comment type="subcellular location">
    <subcellularLocation>
        <location evidence="1">Cytoplasm</location>
    </subcellularLocation>
</comment>
<comment type="similarity">
    <text evidence="1">Belongs to the AccA family.</text>
</comment>
<proteinExistence type="inferred from homology"/>
<accession>B5Z0G4</accession>
<sequence length="319" mass="35242">MSLNFLDFEQPIAELEAKIDSLTAVSRQDEKLDINIDEEVHRLREKSVELTRKIFADLGAWQIAQLARHPQRPYTLDYVRLAFDEFDELAGDRAYADDKAIVGGIARLDGRPVMIIGHQKGRETKEKIRRNFGMPAPEGYRKALRLMQMAERFKMPIITFIDTPGAYPGVGAEERGQSEAIARNLREMSRLGVPVVCTVIGEGGSGGALAIGVGDKVNMLQYSTYSVISPEGCASILWKSADKAPLAAEAMGIIAPRLKELKLIDSIIPEPLGGAHRNPEAMAASLKAQLLADLADLDVLSTEDLKNRRYQRLMSYGYA</sequence>
<name>ACCA_ECO5E</name>
<gene>
    <name evidence="1" type="primary">accA</name>
    <name type="ordered locus">ECH74115_0195</name>
</gene>
<protein>
    <recommendedName>
        <fullName evidence="1">Acetyl-coenzyme A carboxylase carboxyl transferase subunit alpha</fullName>
        <shortName evidence="1">ACCase subunit alpha</shortName>
        <shortName evidence="1">Acetyl-CoA carboxylase carboxyltransferase subunit alpha</shortName>
        <ecNumber evidence="1">2.1.3.15</ecNumber>
    </recommendedName>
</protein>
<feature type="chain" id="PRO_1000134483" description="Acetyl-coenzyme A carboxylase carboxyl transferase subunit alpha">
    <location>
        <begin position="1"/>
        <end position="319"/>
    </location>
</feature>
<feature type="domain" description="CoA carboxyltransferase C-terminal" evidence="2">
    <location>
        <begin position="35"/>
        <end position="296"/>
    </location>
</feature>